<comment type="function">
    <text evidence="1">Probable ATPase of unknown function. Its presence in a non-photosynthetic plant (Epifagus virginiana) and experiments in tobacco indicate that it has an essential function which is probably not related to photosynthesis.</text>
</comment>
<comment type="subcellular location">
    <subcellularLocation>
        <location evidence="1">Plastid</location>
        <location evidence="1">Chloroplast stroma</location>
    </subcellularLocation>
</comment>
<comment type="similarity">
    <text evidence="1">Belongs to the Ycf2 family.</text>
</comment>
<reference key="1">
    <citation type="journal article" date="2006" name="BMC Plant Biol.">
        <title>Rapid and accurate pyrosequencing of angiosperm plastid genomes.</title>
        <authorList>
            <person name="Moore M.J."/>
            <person name="Dhingra A."/>
            <person name="Soltis P.S."/>
            <person name="Shaw R."/>
            <person name="Farmerie W.G."/>
            <person name="Folta K.M."/>
            <person name="Soltis D.E."/>
        </authorList>
    </citation>
    <scope>NUCLEOTIDE SEQUENCE [LARGE SCALE GENOMIC DNA]</scope>
</reference>
<organism>
    <name type="scientific">Nandina domestica</name>
    <name type="common">Heavenly bamboo</name>
    <dbReference type="NCBI Taxonomy" id="41776"/>
    <lineage>
        <taxon>Eukaryota</taxon>
        <taxon>Viridiplantae</taxon>
        <taxon>Streptophyta</taxon>
        <taxon>Embryophyta</taxon>
        <taxon>Tracheophyta</taxon>
        <taxon>Spermatophyta</taxon>
        <taxon>Magnoliopsida</taxon>
        <taxon>Ranunculales</taxon>
        <taxon>Berberidaceae</taxon>
        <taxon>Nandinoideae</taxon>
        <taxon>Nandineae</taxon>
        <taxon>Nandina</taxon>
    </lineage>
</organism>
<sequence>MKQEAAKRHPFKSWIFELREILREIKNSHYFLDSWTKFDSVGSFTHIFFHQERFMKLFDPRIWSILLSRDSQGSTSNRYFTTKGVVLLVVAVLIYRINNRNMVERKNIYLMGLLPIPMNSIGPRNDPLEESFGSSNINRLIVSLLYLPKGKKISESCFMDPKESTWVLPITKKCIMPESNWGSRWWRNRVGKKRDSSCKISNETVAGIEISFKEKDIKYLESPFVSYTDDPIRKDHDWELFDRLSPRKKRNIINLNSGQLFEILVKHWICYLMSSFREKRLIEVEGFFKQQGAGSTIQSNDIEHVSHLFSRNKWGISLQNCAQFHMWQFRQDLFVSWEKNPHESDFFRNVSRENWIWLDNVWLVNKDRFFSFFSKVRNVSSNMQYDSTRSIFVQVTDSSQLKGSSDQSRDHFDSISNEDSEYHTLINQREIQQLKERSILWDPSFLQTERTEIESDRFPKCLSGYSSMSRLFTEREKQMKNHLLPEEIEEFLGNPTRSIRSFFSDRWSELHLGSNPTERSTRDQKLLKKQQDVSFVPSRRSENKEMVDIFKIITYLQNTVSIHPISSDPGCDMVPKDEPDMDSSNKISFLNQNDLFHDRNRGGYTLHHDFESEERFQEMADLLTLSITEPDLVYHKGFAFSIDSYGLDQKKFLNEVFNSRDESKKKSLLVLPPIFYEENESFYRRIRKKWVRISCGNALEDPKPKRVVFASNNIMKAVNQYRLIQNLIQIQYSIHGYIRNVSNQFFLMNRPDRNFEYGIQRDQIGNDTLNHRTIMKYTINQHLSNLKKSQKKWFDPLISRTERSMNRDPDAYRYKWSNGSKNFQEHLEHFVSEQKSRFQVVFDRLRINQYSIDWSEVIDKQDLSKSLRFFLSKLLLFLSKLLLFLSKSLPFFFVSIGNIPIHRSEIHIYELKGPNDQLCNQLLESIGVQIVHLNKLKPFLLDDHDTSQKSKLLINGGTISPFLFNKIPKWMIDSFHTRKNRRKSLDNTDSYFSMISHDRDNWLNPVKPFHRSSLISSFYKANRLRFLNNPHHFWFYCNKRFPFYVERARINNYDLTYGQFLNILFIRNKIFSLCVGKKKHVFLERDTPIESQVSNIFIPNDFPPSGDETYNLYKSFHFPIRSAPFVRRALYSIADISGTPLTEGQIVNFERTYCQPLSDMNPSDSEGKNLHQYLNFNSNMGLIHIPCSEKYLPSEKRKKRSLCLKKCVEKRQMYRPFQRDSAFSNFSKWNLFQTYMPWFLTSTGCKYLNFTLLDTFSDLLPILSSSQNFVSIFHDIMHGSDISWPIPQKKLWVILPQWNLISEISSKCLHNLLLSEEMIRRNNESPIPLIWAHLRSPNAREFLYSILFLLLVAGYLVRTHLLFVSRASSELQTEFEKIKSLMIPSYMIELRKLLDGYPTSELNSFWLKNLFLVALKQLGDFLEEIRGSASGGNMLLGGGPAYGVKSIRSKKKYLNINLIDIIDFLSIIPNPINRITFSRNTRHLSRTSKEIYSLIRKRKNVNGDWIDDKIESWVANSDSIDDEEREFLVQFSTLMKEKRIDKILLSLTHSDHLSKNDSGYQMIEQPGSVYLRYLVYIHKKYLMNYEFNRSCLAERRIFLAHYQTITYSQTSCGANSFHFPSHGKPFSLRLALSPSRGILVIGSIGTGRSYLVKYLTTNSYVPFITVFPNKFLDDKPKGYLIDDINIDDSDDIDDSDDIDDDLDIDTELLTMMNALTMDMTPKIDRFYITLQLELAKAMSPCIIWIPNIHDLSVNESNYLSLGLLVNHLSRDCERSSTRNILVIASTHIPQKVDPTLIAPNKSNTCIKIRRLLIPQQRKHFFTLSYTRGFHLEKKMFHTNGFGSITMGSNARDLVALTNEALSISITQKKSIIDTNTIRSALHRQTWDLRSQVRSVQDHGILFYQIGRAVAQNVLLSNCPIDPISIYMKKKSCTEGDSYLYKWYFELGTSMKKLTILLYLLSCSAGSVAQDLWSPPGPDEKNWITSYGFVENDSDLVHGLLEVEDALVGSSRTEKDCSQFDNDRVTLLLRSEPRNPLDMMQNGSCSIVDQRFLYEKYESEFEEGEGEGALDPQQLEEDLFNHIVWAPRIWRPCGNLFDCIESPNELGFPYWARSFRGKRIIDHEHEEDELQENDSEFLQSGTMQYQTRDRSFKEQGFFRISQFIWDPADPFFFLFKDQPFVSVFSRREFFADQEMSKGLLTSQTDPSTSMNKRWFINNTQEKHFELLIHRQRWLRTNSSLSNGSFRSNTPSESYQYLSNLFLSNGTLLDQMTKTLLRKRWLFPDEMKHLIHVTGERFPIP</sequence>
<feature type="chain" id="PRO_0000343780" description="Protein Ycf2">
    <location>
        <begin position="1"/>
        <end position="2299"/>
    </location>
</feature>
<feature type="binding site" evidence="1">
    <location>
        <begin position="1642"/>
        <end position="1649"/>
    </location>
    <ligand>
        <name>ATP</name>
        <dbReference type="ChEBI" id="CHEBI:30616"/>
    </ligand>
</feature>
<dbReference type="EMBL" id="DQ923117">
    <property type="protein sequence ID" value="ABI49908.1"/>
    <property type="molecule type" value="Genomic_DNA"/>
</dbReference>
<dbReference type="EMBL" id="DQ923117">
    <property type="protein sequence ID" value="ABI49927.1"/>
    <property type="molecule type" value="Genomic_DNA"/>
</dbReference>
<dbReference type="GO" id="GO:0009570">
    <property type="term" value="C:chloroplast stroma"/>
    <property type="evidence" value="ECO:0007669"/>
    <property type="project" value="UniProtKB-SubCell"/>
</dbReference>
<dbReference type="GO" id="GO:0005524">
    <property type="term" value="F:ATP binding"/>
    <property type="evidence" value="ECO:0007669"/>
    <property type="project" value="UniProtKB-KW"/>
</dbReference>
<dbReference type="GO" id="GO:0016887">
    <property type="term" value="F:ATP hydrolysis activity"/>
    <property type="evidence" value="ECO:0007669"/>
    <property type="project" value="InterPro"/>
</dbReference>
<dbReference type="CDD" id="cd19505">
    <property type="entry name" value="RecA-like_Ycf2"/>
    <property type="match status" value="1"/>
</dbReference>
<dbReference type="Gene3D" id="3.40.50.300">
    <property type="entry name" value="P-loop containing nucleotide triphosphate hydrolases"/>
    <property type="match status" value="1"/>
</dbReference>
<dbReference type="HAMAP" id="MF_01330">
    <property type="entry name" value="Ycf2"/>
    <property type="match status" value="1"/>
</dbReference>
<dbReference type="InterPro" id="IPR003959">
    <property type="entry name" value="ATPase_AAA_core"/>
</dbReference>
<dbReference type="InterPro" id="IPR027417">
    <property type="entry name" value="P-loop_NTPase"/>
</dbReference>
<dbReference type="InterPro" id="IPR008543">
    <property type="entry name" value="Uncharacterised_Ycf2"/>
</dbReference>
<dbReference type="InterPro" id="IPR056777">
    <property type="entry name" value="Ycf2_N"/>
</dbReference>
<dbReference type="PANTHER" id="PTHR33078:SF51">
    <property type="entry name" value="PROTEIN TIC 214"/>
    <property type="match status" value="1"/>
</dbReference>
<dbReference type="PANTHER" id="PTHR33078">
    <property type="entry name" value="PROTEIN YCF2-RELATED"/>
    <property type="match status" value="1"/>
</dbReference>
<dbReference type="Pfam" id="PF00004">
    <property type="entry name" value="AAA"/>
    <property type="match status" value="1"/>
</dbReference>
<dbReference type="Pfam" id="PF05695">
    <property type="entry name" value="Ycf2"/>
    <property type="match status" value="1"/>
</dbReference>
<dbReference type="SUPFAM" id="SSF52540">
    <property type="entry name" value="P-loop containing nucleoside triphosphate hydrolases"/>
    <property type="match status" value="1"/>
</dbReference>
<keyword id="KW-0067">ATP-binding</keyword>
<keyword id="KW-0150">Chloroplast</keyword>
<keyword id="KW-0547">Nucleotide-binding</keyword>
<keyword id="KW-0934">Plastid</keyword>
<evidence type="ECO:0000255" key="1">
    <source>
        <dbReference type="HAMAP-Rule" id="MF_01330"/>
    </source>
</evidence>
<geneLocation type="chloroplast"/>
<gene>
    <name evidence="1" type="primary">ycf2-A</name>
</gene>
<gene>
    <name evidence="1" type="primary">ycf2-B</name>
</gene>
<accession>Q09FP8</accession>
<proteinExistence type="inferred from homology"/>
<protein>
    <recommendedName>
        <fullName evidence="1">Protein Ycf2</fullName>
    </recommendedName>
</protein>
<name>YCF2_NANDO</name>